<keyword id="KW-0963">Cytoplasm</keyword>
<keyword id="KW-0671">Queuosine biosynthesis</keyword>
<keyword id="KW-1185">Reference proteome</keyword>
<keyword id="KW-0949">S-adenosyl-L-methionine</keyword>
<keyword id="KW-0808">Transferase</keyword>
<protein>
    <recommendedName>
        <fullName evidence="1">S-adenosylmethionine:tRNA ribosyltransferase-isomerase</fullName>
        <ecNumber evidence="1">2.4.99.17</ecNumber>
    </recommendedName>
    <alternativeName>
        <fullName evidence="1">Queuosine biosynthesis protein QueA</fullName>
    </alternativeName>
</protein>
<name>QUEA_MACCJ</name>
<evidence type="ECO:0000255" key="1">
    <source>
        <dbReference type="HAMAP-Rule" id="MF_00113"/>
    </source>
</evidence>
<accession>B9E717</accession>
<feature type="chain" id="PRO_1000119158" description="S-adenosylmethionine:tRNA ribosyltransferase-isomerase">
    <location>
        <begin position="1"/>
        <end position="340"/>
    </location>
</feature>
<comment type="function">
    <text evidence="1">Transfers and isomerizes the ribose moiety from AdoMet to the 7-aminomethyl group of 7-deazaguanine (preQ1-tRNA) to give epoxyqueuosine (oQ-tRNA).</text>
</comment>
<comment type="catalytic activity">
    <reaction evidence="1">
        <text>7-aminomethyl-7-carbaguanosine(34) in tRNA + S-adenosyl-L-methionine = epoxyqueuosine(34) in tRNA + adenine + L-methionine + 2 H(+)</text>
        <dbReference type="Rhea" id="RHEA:32155"/>
        <dbReference type="Rhea" id="RHEA-COMP:10342"/>
        <dbReference type="Rhea" id="RHEA-COMP:18582"/>
        <dbReference type="ChEBI" id="CHEBI:15378"/>
        <dbReference type="ChEBI" id="CHEBI:16708"/>
        <dbReference type="ChEBI" id="CHEBI:57844"/>
        <dbReference type="ChEBI" id="CHEBI:59789"/>
        <dbReference type="ChEBI" id="CHEBI:82833"/>
        <dbReference type="ChEBI" id="CHEBI:194443"/>
        <dbReference type="EC" id="2.4.99.17"/>
    </reaction>
</comment>
<comment type="pathway">
    <text evidence="1">tRNA modification; tRNA-queuosine biosynthesis.</text>
</comment>
<comment type="subunit">
    <text evidence="1">Monomer.</text>
</comment>
<comment type="subcellular location">
    <subcellularLocation>
        <location evidence="1">Cytoplasm</location>
    </subcellularLocation>
</comment>
<comment type="similarity">
    <text evidence="1">Belongs to the QueA family.</text>
</comment>
<proteinExistence type="inferred from homology"/>
<sequence>MDVNEFDFNLPESLIAQTPLQDRTASRLLTLNKHTGEIKHTNFKSIIDYLNTGDTLVLNDTKVMPARLFGVKEDTGAKIEMLMLTEHDNGWEVLIKPAKRVTIGTRISFGEGKIVAICVEELDQGGRIMQLNYEGILQERLDELGLMPLPPYIKETLEDQSRYQTVYARATGSAAAPTAGLHFTESLLEDIKAKGINIAYITLHVGLGTFRPVSVDDVESHKMHSEYYEMSEETAKLLNDTRDSGNRIITVGTTSTRTLETIADDSGHFTAQSGWTDIFIYPGYSFKAVDAMITNFHLPKSTLVMLVSSLATKEFIMNAYNEAVNEKYRFFSFGDAMFIY</sequence>
<gene>
    <name evidence="1" type="primary">queA</name>
    <name type="ordered locus">MCCL_1278</name>
</gene>
<organism>
    <name type="scientific">Macrococcus caseolyticus (strain JCSC5402)</name>
    <name type="common">Macrococcoides caseolyticum</name>
    <dbReference type="NCBI Taxonomy" id="458233"/>
    <lineage>
        <taxon>Bacteria</taxon>
        <taxon>Bacillati</taxon>
        <taxon>Bacillota</taxon>
        <taxon>Bacilli</taxon>
        <taxon>Bacillales</taxon>
        <taxon>Staphylococcaceae</taxon>
        <taxon>Macrococcoides</taxon>
    </lineage>
</organism>
<reference key="1">
    <citation type="journal article" date="2009" name="J. Bacteriol.">
        <title>Complete genome sequence of Macrococcus caseolyticus strain JCSCS5402, reflecting the ancestral genome of the human-pathogenic staphylococci.</title>
        <authorList>
            <person name="Baba T."/>
            <person name="Kuwahara-Arai K."/>
            <person name="Uchiyama I."/>
            <person name="Takeuchi F."/>
            <person name="Ito T."/>
            <person name="Hiramatsu K."/>
        </authorList>
    </citation>
    <scope>NUCLEOTIDE SEQUENCE [LARGE SCALE GENOMIC DNA]</scope>
    <source>
        <strain>JCSC5402</strain>
    </source>
</reference>
<dbReference type="EC" id="2.4.99.17" evidence="1"/>
<dbReference type="EMBL" id="AP009484">
    <property type="protein sequence ID" value="BAH17985.1"/>
    <property type="molecule type" value="Genomic_DNA"/>
</dbReference>
<dbReference type="RefSeq" id="WP_012657183.1">
    <property type="nucleotide sequence ID" value="NC_011999.1"/>
</dbReference>
<dbReference type="SMR" id="B9E717"/>
<dbReference type="STRING" id="458233.MCCL_1278"/>
<dbReference type="KEGG" id="mcl:MCCL_1278"/>
<dbReference type="eggNOG" id="COG0809">
    <property type="taxonomic scope" value="Bacteria"/>
</dbReference>
<dbReference type="HOGENOM" id="CLU_039110_1_0_9"/>
<dbReference type="OrthoDB" id="9805933at2"/>
<dbReference type="UniPathway" id="UPA00392"/>
<dbReference type="Proteomes" id="UP000001383">
    <property type="component" value="Chromosome"/>
</dbReference>
<dbReference type="GO" id="GO:0005737">
    <property type="term" value="C:cytoplasm"/>
    <property type="evidence" value="ECO:0007669"/>
    <property type="project" value="UniProtKB-SubCell"/>
</dbReference>
<dbReference type="GO" id="GO:0051075">
    <property type="term" value="F:S-adenosylmethionine:tRNA ribosyltransferase-isomerase activity"/>
    <property type="evidence" value="ECO:0007669"/>
    <property type="project" value="UniProtKB-EC"/>
</dbReference>
<dbReference type="GO" id="GO:0008616">
    <property type="term" value="P:queuosine biosynthetic process"/>
    <property type="evidence" value="ECO:0007669"/>
    <property type="project" value="UniProtKB-UniRule"/>
</dbReference>
<dbReference type="GO" id="GO:0002099">
    <property type="term" value="P:tRNA wobble guanine modification"/>
    <property type="evidence" value="ECO:0007669"/>
    <property type="project" value="TreeGrafter"/>
</dbReference>
<dbReference type="FunFam" id="2.40.10.240:FF:000002">
    <property type="entry name" value="S-adenosylmethionine:tRNA ribosyltransferase-isomerase"/>
    <property type="match status" value="1"/>
</dbReference>
<dbReference type="FunFam" id="3.40.1780.10:FF:000001">
    <property type="entry name" value="S-adenosylmethionine:tRNA ribosyltransferase-isomerase"/>
    <property type="match status" value="1"/>
</dbReference>
<dbReference type="Gene3D" id="2.40.10.240">
    <property type="entry name" value="QueA-like"/>
    <property type="match status" value="1"/>
</dbReference>
<dbReference type="Gene3D" id="3.40.1780.10">
    <property type="entry name" value="QueA-like"/>
    <property type="match status" value="1"/>
</dbReference>
<dbReference type="HAMAP" id="MF_00113">
    <property type="entry name" value="QueA"/>
    <property type="match status" value="1"/>
</dbReference>
<dbReference type="InterPro" id="IPR003699">
    <property type="entry name" value="QueA"/>
</dbReference>
<dbReference type="InterPro" id="IPR042118">
    <property type="entry name" value="QueA_dom1"/>
</dbReference>
<dbReference type="InterPro" id="IPR042119">
    <property type="entry name" value="QueA_dom2"/>
</dbReference>
<dbReference type="InterPro" id="IPR036100">
    <property type="entry name" value="QueA_sf"/>
</dbReference>
<dbReference type="NCBIfam" id="NF001140">
    <property type="entry name" value="PRK00147.1"/>
    <property type="match status" value="1"/>
</dbReference>
<dbReference type="NCBIfam" id="TIGR00113">
    <property type="entry name" value="queA"/>
    <property type="match status" value="1"/>
</dbReference>
<dbReference type="PANTHER" id="PTHR30307">
    <property type="entry name" value="S-ADENOSYLMETHIONINE:TRNA RIBOSYLTRANSFERASE-ISOMERASE"/>
    <property type="match status" value="1"/>
</dbReference>
<dbReference type="PANTHER" id="PTHR30307:SF0">
    <property type="entry name" value="S-ADENOSYLMETHIONINE:TRNA RIBOSYLTRANSFERASE-ISOMERASE"/>
    <property type="match status" value="1"/>
</dbReference>
<dbReference type="Pfam" id="PF02547">
    <property type="entry name" value="Queuosine_synth"/>
    <property type="match status" value="1"/>
</dbReference>
<dbReference type="SUPFAM" id="SSF111337">
    <property type="entry name" value="QueA-like"/>
    <property type="match status" value="1"/>
</dbReference>